<dbReference type="EC" id="4.1.1.39" evidence="1"/>
<dbReference type="EMBL" id="X81100">
    <property type="protein sequence ID" value="CAA57006.1"/>
    <property type="molecule type" value="Genomic_DNA"/>
</dbReference>
<dbReference type="PIR" id="S47230">
    <property type="entry name" value="S47230"/>
</dbReference>
<dbReference type="SMR" id="Q32303"/>
<dbReference type="GO" id="GO:0009507">
    <property type="term" value="C:chloroplast"/>
    <property type="evidence" value="ECO:0007669"/>
    <property type="project" value="UniProtKB-SubCell"/>
</dbReference>
<dbReference type="GO" id="GO:0000287">
    <property type="term" value="F:magnesium ion binding"/>
    <property type="evidence" value="ECO:0007669"/>
    <property type="project" value="InterPro"/>
</dbReference>
<dbReference type="GO" id="GO:0004497">
    <property type="term" value="F:monooxygenase activity"/>
    <property type="evidence" value="ECO:0007669"/>
    <property type="project" value="UniProtKB-KW"/>
</dbReference>
<dbReference type="GO" id="GO:0016984">
    <property type="term" value="F:ribulose-bisphosphate carboxylase activity"/>
    <property type="evidence" value="ECO:0007669"/>
    <property type="project" value="UniProtKB-EC"/>
</dbReference>
<dbReference type="GO" id="GO:0009853">
    <property type="term" value="P:photorespiration"/>
    <property type="evidence" value="ECO:0007669"/>
    <property type="project" value="UniProtKB-KW"/>
</dbReference>
<dbReference type="GO" id="GO:0019253">
    <property type="term" value="P:reductive pentose-phosphate cycle"/>
    <property type="evidence" value="ECO:0007669"/>
    <property type="project" value="UniProtKB-KW"/>
</dbReference>
<dbReference type="CDD" id="cd08212">
    <property type="entry name" value="RuBisCO_large_I"/>
    <property type="match status" value="1"/>
</dbReference>
<dbReference type="FunFam" id="3.20.20.110:FF:000003">
    <property type="entry name" value="Ribulose bisphosphate carboxylase large chain"/>
    <property type="match status" value="1"/>
</dbReference>
<dbReference type="FunFam" id="3.30.70.150:FF:000001">
    <property type="entry name" value="Ribulose bisphosphate carboxylase large chain"/>
    <property type="match status" value="1"/>
</dbReference>
<dbReference type="Gene3D" id="3.20.20.110">
    <property type="entry name" value="Ribulose bisphosphate carboxylase, large subunit, C-terminal domain"/>
    <property type="match status" value="1"/>
</dbReference>
<dbReference type="Gene3D" id="3.30.70.150">
    <property type="entry name" value="RuBisCO large subunit, N-terminal domain"/>
    <property type="match status" value="1"/>
</dbReference>
<dbReference type="HAMAP" id="MF_01338">
    <property type="entry name" value="RuBisCO_L_type1"/>
    <property type="match status" value="1"/>
</dbReference>
<dbReference type="InterPro" id="IPR033966">
    <property type="entry name" value="RuBisCO"/>
</dbReference>
<dbReference type="InterPro" id="IPR020878">
    <property type="entry name" value="RuBisCo_large_chain_AS"/>
</dbReference>
<dbReference type="InterPro" id="IPR000685">
    <property type="entry name" value="RuBisCO_lsu_C"/>
</dbReference>
<dbReference type="InterPro" id="IPR036376">
    <property type="entry name" value="RuBisCO_lsu_C_sf"/>
</dbReference>
<dbReference type="InterPro" id="IPR017443">
    <property type="entry name" value="RuBisCO_lsu_fd_N"/>
</dbReference>
<dbReference type="InterPro" id="IPR036422">
    <property type="entry name" value="RuBisCO_lsu_N_sf"/>
</dbReference>
<dbReference type="InterPro" id="IPR020888">
    <property type="entry name" value="RuBisCO_lsuI"/>
</dbReference>
<dbReference type="NCBIfam" id="NF003252">
    <property type="entry name" value="PRK04208.1"/>
    <property type="match status" value="1"/>
</dbReference>
<dbReference type="PANTHER" id="PTHR42704">
    <property type="entry name" value="RIBULOSE BISPHOSPHATE CARBOXYLASE"/>
    <property type="match status" value="1"/>
</dbReference>
<dbReference type="PANTHER" id="PTHR42704:SF15">
    <property type="entry name" value="RIBULOSE BISPHOSPHATE CARBOXYLASE LARGE CHAIN"/>
    <property type="match status" value="1"/>
</dbReference>
<dbReference type="Pfam" id="PF00016">
    <property type="entry name" value="RuBisCO_large"/>
    <property type="match status" value="1"/>
</dbReference>
<dbReference type="Pfam" id="PF02788">
    <property type="entry name" value="RuBisCO_large_N"/>
    <property type="match status" value="1"/>
</dbReference>
<dbReference type="SFLD" id="SFLDG01052">
    <property type="entry name" value="RuBisCO"/>
    <property type="match status" value="1"/>
</dbReference>
<dbReference type="SFLD" id="SFLDS00014">
    <property type="entry name" value="RuBisCO"/>
    <property type="match status" value="1"/>
</dbReference>
<dbReference type="SFLD" id="SFLDG00301">
    <property type="entry name" value="RuBisCO-like_proteins"/>
    <property type="match status" value="1"/>
</dbReference>
<dbReference type="SUPFAM" id="SSF51649">
    <property type="entry name" value="RuBisCo, C-terminal domain"/>
    <property type="match status" value="1"/>
</dbReference>
<dbReference type="SUPFAM" id="SSF54966">
    <property type="entry name" value="RuBisCO, large subunit, small (N-terminal) domain"/>
    <property type="match status" value="1"/>
</dbReference>
<dbReference type="PROSITE" id="PS00157">
    <property type="entry name" value="RUBISCO_LARGE"/>
    <property type="match status" value="1"/>
</dbReference>
<gene>
    <name evidence="1" type="primary">rbcL</name>
</gene>
<geneLocation type="chloroplast"/>
<proteinExistence type="inferred from homology"/>
<evidence type="ECO:0000255" key="1">
    <source>
        <dbReference type="HAMAP-Rule" id="MF_01338"/>
    </source>
</evidence>
<comment type="function">
    <text evidence="1">RuBisCO catalyzes two reactions: the carboxylation of D-ribulose 1,5-bisphosphate, the primary event in carbon dioxide fixation, as well as the oxidative fragmentation of the pentose substrate in the photorespiration process. Both reactions occur simultaneously and in competition at the same active site.</text>
</comment>
<comment type="catalytic activity">
    <reaction evidence="1">
        <text>2 (2R)-3-phosphoglycerate + 2 H(+) = D-ribulose 1,5-bisphosphate + CO2 + H2O</text>
        <dbReference type="Rhea" id="RHEA:23124"/>
        <dbReference type="ChEBI" id="CHEBI:15377"/>
        <dbReference type="ChEBI" id="CHEBI:15378"/>
        <dbReference type="ChEBI" id="CHEBI:16526"/>
        <dbReference type="ChEBI" id="CHEBI:57870"/>
        <dbReference type="ChEBI" id="CHEBI:58272"/>
        <dbReference type="EC" id="4.1.1.39"/>
    </reaction>
</comment>
<comment type="catalytic activity">
    <reaction evidence="1">
        <text>D-ribulose 1,5-bisphosphate + O2 = 2-phosphoglycolate + (2R)-3-phosphoglycerate + 2 H(+)</text>
        <dbReference type="Rhea" id="RHEA:36631"/>
        <dbReference type="ChEBI" id="CHEBI:15378"/>
        <dbReference type="ChEBI" id="CHEBI:15379"/>
        <dbReference type="ChEBI" id="CHEBI:57870"/>
        <dbReference type="ChEBI" id="CHEBI:58033"/>
        <dbReference type="ChEBI" id="CHEBI:58272"/>
    </reaction>
</comment>
<comment type="cofactor">
    <cofactor evidence="1">
        <name>Mg(2+)</name>
        <dbReference type="ChEBI" id="CHEBI:18420"/>
    </cofactor>
    <text evidence="1">Binds 1 Mg(2+) ion per subunit.</text>
</comment>
<comment type="subunit">
    <text evidence="1">Heterohexadecamer of 8 large chains and 8 small chains; disulfide-linked. The disulfide link is formed within the large subunit homodimers.</text>
</comment>
<comment type="subcellular location">
    <subcellularLocation>
        <location>Plastid</location>
        <location>Chloroplast</location>
    </subcellularLocation>
</comment>
<comment type="PTM">
    <text evidence="1">The disulfide bond which can form in the large chain dimeric partners within the hexadecamer appears to be associated with oxidative stress and protein turnover.</text>
</comment>
<comment type="miscellaneous">
    <text evidence="1">The basic functional RuBisCO is composed of a large chain homodimer in a 'head-to-tail' conformation. In form I RuBisCO this homodimer is arranged in a barrel-like tetramer with the small subunits forming a tetrameric 'cap' on each end of the 'barrel'.</text>
</comment>
<comment type="similarity">
    <text evidence="1">Belongs to the RuBisCO large chain family. Type I subfamily.</text>
</comment>
<name>RBL_GALLU</name>
<reference key="1">
    <citation type="journal article" date="1995" name="J. Mol. Evol.">
        <title>Comparison of the evolution of ribulose-1, 5-biphosphate carboxylase (rbcL) and atpB-rbcL noncoding spacer sequences in a recent plant group, the tribe Rubieae (Rubiaceae).</title>
        <authorList>
            <person name="Manen J.F."/>
            <person name="Natali A."/>
        </authorList>
    </citation>
    <scope>NUCLEOTIDE SEQUENCE [GENOMIC DNA]</scope>
</reference>
<protein>
    <recommendedName>
        <fullName evidence="1">Ribulose bisphosphate carboxylase large chain</fullName>
        <shortName evidence="1">RuBisCO large subunit</shortName>
        <ecNumber evidence="1">4.1.1.39</ecNumber>
    </recommendedName>
</protein>
<feature type="propeptide" id="PRO_0000031233" evidence="1">
    <location>
        <begin position="1"/>
        <end position="2"/>
    </location>
</feature>
<feature type="chain" id="PRO_0000031234" description="Ribulose bisphosphate carboxylase large chain">
    <location>
        <begin position="3"/>
        <end position="453" status="greater than"/>
    </location>
</feature>
<feature type="active site" description="Proton acceptor" evidence="1">
    <location>
        <position position="175"/>
    </location>
</feature>
<feature type="active site" description="Proton acceptor" evidence="1">
    <location>
        <position position="294"/>
    </location>
</feature>
<feature type="binding site" description="in homodimeric partner" evidence="1">
    <location>
        <position position="123"/>
    </location>
    <ligand>
        <name>substrate</name>
    </ligand>
</feature>
<feature type="binding site" evidence="1">
    <location>
        <position position="173"/>
    </location>
    <ligand>
        <name>substrate</name>
    </ligand>
</feature>
<feature type="binding site" evidence="1">
    <location>
        <position position="177"/>
    </location>
    <ligand>
        <name>substrate</name>
    </ligand>
</feature>
<feature type="binding site" description="via carbamate group" evidence="1">
    <location>
        <position position="201"/>
    </location>
    <ligand>
        <name>Mg(2+)</name>
        <dbReference type="ChEBI" id="CHEBI:18420"/>
    </ligand>
</feature>
<feature type="binding site" evidence="1">
    <location>
        <position position="203"/>
    </location>
    <ligand>
        <name>Mg(2+)</name>
        <dbReference type="ChEBI" id="CHEBI:18420"/>
    </ligand>
</feature>
<feature type="binding site" evidence="1">
    <location>
        <position position="204"/>
    </location>
    <ligand>
        <name>Mg(2+)</name>
        <dbReference type="ChEBI" id="CHEBI:18420"/>
    </ligand>
</feature>
<feature type="binding site" evidence="1">
    <location>
        <position position="295"/>
    </location>
    <ligand>
        <name>substrate</name>
    </ligand>
</feature>
<feature type="binding site" evidence="1">
    <location>
        <position position="327"/>
    </location>
    <ligand>
        <name>substrate</name>
    </ligand>
</feature>
<feature type="binding site" evidence="1">
    <location>
        <position position="379"/>
    </location>
    <ligand>
        <name>substrate</name>
    </ligand>
</feature>
<feature type="site" description="Transition state stabilizer" evidence="1">
    <location>
        <position position="334"/>
    </location>
</feature>
<feature type="modified residue" description="N-acetylproline" evidence="1">
    <location>
        <position position="3"/>
    </location>
</feature>
<feature type="modified residue" description="N6,N6,N6-trimethyllysine" evidence="1">
    <location>
        <position position="14"/>
    </location>
</feature>
<feature type="modified residue" description="N6-carboxylysine" evidence="1">
    <location>
        <position position="201"/>
    </location>
</feature>
<feature type="disulfide bond" description="Interchain; in linked form" evidence="1">
    <location>
        <position position="247"/>
    </location>
</feature>
<feature type="non-terminal residue">
    <location>
        <position position="453"/>
    </location>
</feature>
<organism>
    <name type="scientific">Galium lucidum</name>
    <dbReference type="NCBI Taxonomy" id="29792"/>
    <lineage>
        <taxon>Eukaryota</taxon>
        <taxon>Viridiplantae</taxon>
        <taxon>Streptophyta</taxon>
        <taxon>Embryophyta</taxon>
        <taxon>Tracheophyta</taxon>
        <taxon>Spermatophyta</taxon>
        <taxon>Magnoliopsida</taxon>
        <taxon>eudicotyledons</taxon>
        <taxon>Gunneridae</taxon>
        <taxon>Pentapetalae</taxon>
        <taxon>asterids</taxon>
        <taxon>lamiids</taxon>
        <taxon>Gentianales</taxon>
        <taxon>Rubiaceae</taxon>
        <taxon>Rubioideae</taxon>
        <taxon>Rubieae</taxon>
        <taxon>Galium</taxon>
    </lineage>
</organism>
<keyword id="KW-0007">Acetylation</keyword>
<keyword id="KW-0113">Calvin cycle</keyword>
<keyword id="KW-0120">Carbon dioxide fixation</keyword>
<keyword id="KW-0150">Chloroplast</keyword>
<keyword id="KW-1015">Disulfide bond</keyword>
<keyword id="KW-0456">Lyase</keyword>
<keyword id="KW-0460">Magnesium</keyword>
<keyword id="KW-0479">Metal-binding</keyword>
<keyword id="KW-0488">Methylation</keyword>
<keyword id="KW-0503">Monooxygenase</keyword>
<keyword id="KW-0560">Oxidoreductase</keyword>
<keyword id="KW-0601">Photorespiration</keyword>
<keyword id="KW-0602">Photosynthesis</keyword>
<keyword id="KW-0934">Plastid</keyword>
<sequence>MSPQTETKAGVGFKAGVKEYKLTYYTPEYETKDTDILAAFRVTPQPGVPPEERGAAVAAESSTGTWTTVWTDGLTSLDRYKGRCYHIEPVPGEEEQFIAYVAYPLDLFEEGSVTNMFTSIVGNVFGFKALRALRLEDLRIPVAYVKTFQGPPHGIQVERDKLNKYGRPLLGCTIKPKLGLSAKNYGRAVYECLRGGLDFTKDDENVNSQPFMRWRDRFLFCAEAIYKSQAETGEIKGHYLNATAGTCEEMIKRAVFARELGVPIVMHDYLTGGFTANTSLSHYCRDNGLLLHIHRAMHAVIDRQKNHGMHFRVLAKALRMSGGDHVHSGTVVGKLEGERDITLGFVDLLRDDYIEKDRSRGVYFTQDWVSLPGVLPVASRGIHVWHMPALTEIFGDDSVLQFGGGTLGHPWGNAPGAVANRVALEACVKARNEGRDLAAEGGEIIREACKWSP</sequence>
<accession>Q32303</accession>